<reference key="1">
    <citation type="submission" date="2007-06" db="EMBL/GenBank/DDBJ databases">
        <title>Complete sequence of Methanococcus maripaludis C7.</title>
        <authorList>
            <consortium name="US DOE Joint Genome Institute"/>
            <person name="Copeland A."/>
            <person name="Lucas S."/>
            <person name="Lapidus A."/>
            <person name="Barry K."/>
            <person name="Glavina del Rio T."/>
            <person name="Dalin E."/>
            <person name="Tice H."/>
            <person name="Pitluck S."/>
            <person name="Clum A."/>
            <person name="Schmutz J."/>
            <person name="Larimer F."/>
            <person name="Land M."/>
            <person name="Hauser L."/>
            <person name="Kyrpides N."/>
            <person name="Anderson I."/>
            <person name="Sieprawska-Lupa M."/>
            <person name="Whitman W.B."/>
            <person name="Richardson P."/>
        </authorList>
    </citation>
    <scope>NUCLEOTIDE SEQUENCE [LARGE SCALE GENOMIC DNA]</scope>
    <source>
        <strain>C7 / ATCC BAA-1331</strain>
    </source>
</reference>
<proteinExistence type="inferred from homology"/>
<accession>A6VIL1</accession>
<organism>
    <name type="scientific">Methanococcus maripaludis (strain C7 / ATCC BAA-1331)</name>
    <dbReference type="NCBI Taxonomy" id="426368"/>
    <lineage>
        <taxon>Archaea</taxon>
        <taxon>Methanobacteriati</taxon>
        <taxon>Methanobacteriota</taxon>
        <taxon>Methanomada group</taxon>
        <taxon>Methanococci</taxon>
        <taxon>Methanococcales</taxon>
        <taxon>Methanococcaceae</taxon>
        <taxon>Methanococcus</taxon>
    </lineage>
</organism>
<name>GSA_METM7</name>
<sequence length="427" mass="47531">MELNIKMDRSRELFEESRKYLVGGVNSPVRSFKPFPFFVKSAKDCFLYDEDGNEFIDYCLAYGPMVLGHANENILNAVKSQMDLGTAYGVPSEKEIILAKEVINRIPCAEMVRFVNSGTEATMGAIRLARGVTKRNKIIKFEGAFHGAHDYVLVKTGSGALTHGAPNSPGIPEDTTKNTLLIPFNDEDAVKKVISENKDEIACIILEPVMGNVGCILPKDGYLQFLREITEENGIILIFDEVITGFRLSKGGAQEYYGIKSDLATVGKILGGGFPIGAITGKKEYMEQFSPNGQIYQAGTFNGNPVSVTAGIETLKNLDDKFYKETTKKADILSSFLRETAEKYNVPAKVYNVASIFQIYFNDKEIVTYEDAKSSDTEKFMRYFYTLLENGVFIAPSQFECCFTSIKHNDEVLEKTMNAIDIAMKKL</sequence>
<gene>
    <name evidence="1" type="primary">hemL</name>
    <name type="ordered locus">MmarC7_1224</name>
</gene>
<dbReference type="EC" id="5.4.3.8" evidence="1"/>
<dbReference type="EMBL" id="CP000745">
    <property type="protein sequence ID" value="ABR66287.1"/>
    <property type="molecule type" value="Genomic_DNA"/>
</dbReference>
<dbReference type="SMR" id="A6VIL1"/>
<dbReference type="STRING" id="426368.MmarC7_1224"/>
<dbReference type="KEGG" id="mmz:MmarC7_1224"/>
<dbReference type="eggNOG" id="arCOG00918">
    <property type="taxonomic scope" value="Archaea"/>
</dbReference>
<dbReference type="HOGENOM" id="CLU_016922_1_5_2"/>
<dbReference type="OrthoDB" id="6524at2157"/>
<dbReference type="UniPathway" id="UPA00251">
    <property type="reaction ID" value="UER00317"/>
</dbReference>
<dbReference type="GO" id="GO:0005737">
    <property type="term" value="C:cytoplasm"/>
    <property type="evidence" value="ECO:0007669"/>
    <property type="project" value="UniProtKB-SubCell"/>
</dbReference>
<dbReference type="GO" id="GO:0042286">
    <property type="term" value="F:glutamate-1-semialdehyde 2,1-aminomutase activity"/>
    <property type="evidence" value="ECO:0007669"/>
    <property type="project" value="UniProtKB-UniRule"/>
</dbReference>
<dbReference type="GO" id="GO:0030170">
    <property type="term" value="F:pyridoxal phosphate binding"/>
    <property type="evidence" value="ECO:0007669"/>
    <property type="project" value="InterPro"/>
</dbReference>
<dbReference type="GO" id="GO:0008483">
    <property type="term" value="F:transaminase activity"/>
    <property type="evidence" value="ECO:0007669"/>
    <property type="project" value="InterPro"/>
</dbReference>
<dbReference type="GO" id="GO:0006782">
    <property type="term" value="P:protoporphyrinogen IX biosynthetic process"/>
    <property type="evidence" value="ECO:0007669"/>
    <property type="project" value="UniProtKB-UniRule"/>
</dbReference>
<dbReference type="CDD" id="cd00610">
    <property type="entry name" value="OAT_like"/>
    <property type="match status" value="1"/>
</dbReference>
<dbReference type="FunFam" id="3.40.640.10:FF:000021">
    <property type="entry name" value="Glutamate-1-semialdehyde 2,1-aminomutase"/>
    <property type="match status" value="1"/>
</dbReference>
<dbReference type="Gene3D" id="3.90.1150.10">
    <property type="entry name" value="Aspartate Aminotransferase, domain 1"/>
    <property type="match status" value="1"/>
</dbReference>
<dbReference type="Gene3D" id="3.40.640.10">
    <property type="entry name" value="Type I PLP-dependent aspartate aminotransferase-like (Major domain)"/>
    <property type="match status" value="1"/>
</dbReference>
<dbReference type="HAMAP" id="MF_00375">
    <property type="entry name" value="HemL_aminotrans_3"/>
    <property type="match status" value="1"/>
</dbReference>
<dbReference type="InterPro" id="IPR004639">
    <property type="entry name" value="4pyrrol_synth_GluAld_NH2Trfase"/>
</dbReference>
<dbReference type="InterPro" id="IPR005814">
    <property type="entry name" value="Aminotrans_3"/>
</dbReference>
<dbReference type="InterPro" id="IPR049704">
    <property type="entry name" value="Aminotrans_3_PPA_site"/>
</dbReference>
<dbReference type="InterPro" id="IPR015424">
    <property type="entry name" value="PyrdxlP-dep_Trfase"/>
</dbReference>
<dbReference type="InterPro" id="IPR015421">
    <property type="entry name" value="PyrdxlP-dep_Trfase_major"/>
</dbReference>
<dbReference type="InterPro" id="IPR015422">
    <property type="entry name" value="PyrdxlP-dep_Trfase_small"/>
</dbReference>
<dbReference type="NCBIfam" id="TIGR00713">
    <property type="entry name" value="hemL"/>
    <property type="match status" value="1"/>
</dbReference>
<dbReference type="NCBIfam" id="NF000818">
    <property type="entry name" value="PRK00062.1"/>
    <property type="match status" value="1"/>
</dbReference>
<dbReference type="PANTHER" id="PTHR43713">
    <property type="entry name" value="GLUTAMATE-1-SEMIALDEHYDE 2,1-AMINOMUTASE"/>
    <property type="match status" value="1"/>
</dbReference>
<dbReference type="PANTHER" id="PTHR43713:SF3">
    <property type="entry name" value="GLUTAMATE-1-SEMIALDEHYDE 2,1-AMINOMUTASE 1, CHLOROPLASTIC-RELATED"/>
    <property type="match status" value="1"/>
</dbReference>
<dbReference type="Pfam" id="PF00202">
    <property type="entry name" value="Aminotran_3"/>
    <property type="match status" value="1"/>
</dbReference>
<dbReference type="SUPFAM" id="SSF53383">
    <property type="entry name" value="PLP-dependent transferases"/>
    <property type="match status" value="1"/>
</dbReference>
<dbReference type="PROSITE" id="PS00600">
    <property type="entry name" value="AA_TRANSFER_CLASS_3"/>
    <property type="match status" value="1"/>
</dbReference>
<evidence type="ECO:0000255" key="1">
    <source>
        <dbReference type="HAMAP-Rule" id="MF_00375"/>
    </source>
</evidence>
<protein>
    <recommendedName>
        <fullName evidence="1">Glutamate-1-semialdehyde 2,1-aminomutase</fullName>
        <shortName evidence="1">GSA</shortName>
        <ecNumber evidence="1">5.4.3.8</ecNumber>
    </recommendedName>
    <alternativeName>
        <fullName evidence="1">Glutamate-1-semialdehyde aminotransferase</fullName>
        <shortName evidence="1">GSA-AT</shortName>
    </alternativeName>
</protein>
<feature type="chain" id="PRO_0000382402" description="Glutamate-1-semialdehyde 2,1-aminomutase">
    <location>
        <begin position="1"/>
        <end position="427"/>
    </location>
</feature>
<feature type="modified residue" description="N6-(pyridoxal phosphate)lysine" evidence="1">
    <location>
        <position position="268"/>
    </location>
</feature>
<keyword id="KW-0963">Cytoplasm</keyword>
<keyword id="KW-0413">Isomerase</keyword>
<keyword id="KW-0627">Porphyrin biosynthesis</keyword>
<keyword id="KW-0663">Pyridoxal phosphate</keyword>
<comment type="catalytic activity">
    <reaction evidence="1">
        <text>(S)-4-amino-5-oxopentanoate = 5-aminolevulinate</text>
        <dbReference type="Rhea" id="RHEA:14265"/>
        <dbReference type="ChEBI" id="CHEBI:57501"/>
        <dbReference type="ChEBI" id="CHEBI:356416"/>
        <dbReference type="EC" id="5.4.3.8"/>
    </reaction>
</comment>
<comment type="cofactor">
    <cofactor evidence="1">
        <name>pyridoxal 5'-phosphate</name>
        <dbReference type="ChEBI" id="CHEBI:597326"/>
    </cofactor>
</comment>
<comment type="pathway">
    <text evidence="1">Porphyrin-containing compound metabolism; protoporphyrin-IX biosynthesis; 5-aminolevulinate from L-glutamyl-tRNA(Glu): step 2/2.</text>
</comment>
<comment type="subcellular location">
    <subcellularLocation>
        <location evidence="1">Cytoplasm</location>
    </subcellularLocation>
</comment>
<comment type="similarity">
    <text evidence="1">Belongs to the class-III pyridoxal-phosphate-dependent aminotransferase family. HemL subfamily.</text>
</comment>